<evidence type="ECO:0000255" key="1">
    <source>
        <dbReference type="HAMAP-Rule" id="MF_01201"/>
    </source>
</evidence>
<feature type="chain" id="PRO_0000114585" description="Alanine racemase">
    <location>
        <begin position="1"/>
        <end position="366"/>
    </location>
</feature>
<feature type="active site" description="Proton acceptor; specific for D-alanine" evidence="1">
    <location>
        <position position="40"/>
    </location>
</feature>
<feature type="active site" description="Proton acceptor; specific for L-alanine" evidence="1">
    <location>
        <position position="263"/>
    </location>
</feature>
<feature type="binding site" evidence="1">
    <location>
        <position position="136"/>
    </location>
    <ligand>
        <name>substrate</name>
    </ligand>
</feature>
<feature type="binding site" evidence="1">
    <location>
        <position position="310"/>
    </location>
    <ligand>
        <name>substrate</name>
    </ligand>
</feature>
<feature type="modified residue" description="N6-(pyridoxal phosphate)lysine" evidence="1">
    <location>
        <position position="40"/>
    </location>
</feature>
<name>ALR_STRP6</name>
<keyword id="KW-0413">Isomerase</keyword>
<keyword id="KW-0663">Pyridoxal phosphate</keyword>
<protein>
    <recommendedName>
        <fullName evidence="1">Alanine racemase</fullName>
        <ecNumber evidence="1">5.1.1.1</ecNumber>
    </recommendedName>
</protein>
<accession>Q5XAA4</accession>
<gene>
    <name type="primary">alr</name>
    <name type="ordered locus">M6_Spy1524</name>
</gene>
<reference key="1">
    <citation type="journal article" date="2004" name="J. Infect. Dis.">
        <title>Progress toward characterization of the group A Streptococcus metagenome: complete genome sequence of a macrolide-resistant serotype M6 strain.</title>
        <authorList>
            <person name="Banks D.J."/>
            <person name="Porcella S.F."/>
            <person name="Barbian K.D."/>
            <person name="Beres S.B."/>
            <person name="Philips L.E."/>
            <person name="Voyich J.M."/>
            <person name="DeLeo F.R."/>
            <person name="Martin J.M."/>
            <person name="Somerville G.A."/>
            <person name="Musser J.M."/>
        </authorList>
    </citation>
    <scope>NUCLEOTIDE SEQUENCE [LARGE SCALE GENOMIC DNA]</scope>
    <source>
        <strain>ATCC BAA-946 / MGAS10394</strain>
    </source>
</reference>
<proteinExistence type="inferred from homology"/>
<comment type="function">
    <text evidence="1">Catalyzes the interconversion of L-alanine and D-alanine. May also act on other amino acids.</text>
</comment>
<comment type="catalytic activity">
    <reaction evidence="1">
        <text>L-alanine = D-alanine</text>
        <dbReference type="Rhea" id="RHEA:20249"/>
        <dbReference type="ChEBI" id="CHEBI:57416"/>
        <dbReference type="ChEBI" id="CHEBI:57972"/>
        <dbReference type="EC" id="5.1.1.1"/>
    </reaction>
</comment>
<comment type="cofactor">
    <cofactor evidence="1">
        <name>pyridoxal 5'-phosphate</name>
        <dbReference type="ChEBI" id="CHEBI:597326"/>
    </cofactor>
</comment>
<comment type="pathway">
    <text evidence="1">Amino-acid biosynthesis; D-alanine biosynthesis; D-alanine from L-alanine: step 1/1.</text>
</comment>
<comment type="similarity">
    <text evidence="1">Belongs to the alanine racemase family.</text>
</comment>
<dbReference type="EC" id="5.1.1.1" evidence="1"/>
<dbReference type="EMBL" id="CP000003">
    <property type="protein sequence ID" value="AAT87659.1"/>
    <property type="molecule type" value="Genomic_DNA"/>
</dbReference>
<dbReference type="RefSeq" id="WP_011018178.1">
    <property type="nucleotide sequence ID" value="NC_006086.1"/>
</dbReference>
<dbReference type="SMR" id="Q5XAA4"/>
<dbReference type="KEGG" id="spa:M6_Spy1524"/>
<dbReference type="HOGENOM" id="CLU_028393_2_1_9"/>
<dbReference type="UniPathway" id="UPA00042">
    <property type="reaction ID" value="UER00497"/>
</dbReference>
<dbReference type="Proteomes" id="UP000001167">
    <property type="component" value="Chromosome"/>
</dbReference>
<dbReference type="GO" id="GO:0005829">
    <property type="term" value="C:cytosol"/>
    <property type="evidence" value="ECO:0007669"/>
    <property type="project" value="TreeGrafter"/>
</dbReference>
<dbReference type="GO" id="GO:0008784">
    <property type="term" value="F:alanine racemase activity"/>
    <property type="evidence" value="ECO:0007669"/>
    <property type="project" value="UniProtKB-UniRule"/>
</dbReference>
<dbReference type="GO" id="GO:0030170">
    <property type="term" value="F:pyridoxal phosphate binding"/>
    <property type="evidence" value="ECO:0007669"/>
    <property type="project" value="UniProtKB-UniRule"/>
</dbReference>
<dbReference type="GO" id="GO:0030632">
    <property type="term" value="P:D-alanine biosynthetic process"/>
    <property type="evidence" value="ECO:0007669"/>
    <property type="project" value="UniProtKB-UniRule"/>
</dbReference>
<dbReference type="GO" id="GO:0009252">
    <property type="term" value="P:peptidoglycan biosynthetic process"/>
    <property type="evidence" value="ECO:0007669"/>
    <property type="project" value="TreeGrafter"/>
</dbReference>
<dbReference type="CDD" id="cd00430">
    <property type="entry name" value="PLPDE_III_AR"/>
    <property type="match status" value="1"/>
</dbReference>
<dbReference type="FunFam" id="2.40.37.10:FF:000006">
    <property type="entry name" value="Alanine racemase"/>
    <property type="match status" value="1"/>
</dbReference>
<dbReference type="FunFam" id="3.20.20.10:FF:000002">
    <property type="entry name" value="Alanine racemase"/>
    <property type="match status" value="1"/>
</dbReference>
<dbReference type="Gene3D" id="3.20.20.10">
    <property type="entry name" value="Alanine racemase"/>
    <property type="match status" value="1"/>
</dbReference>
<dbReference type="Gene3D" id="2.40.37.10">
    <property type="entry name" value="Lyase, Ornithine Decarboxylase, Chain A, domain 1"/>
    <property type="match status" value="1"/>
</dbReference>
<dbReference type="HAMAP" id="MF_01201">
    <property type="entry name" value="Ala_racemase"/>
    <property type="match status" value="1"/>
</dbReference>
<dbReference type="InterPro" id="IPR000821">
    <property type="entry name" value="Ala_racemase"/>
</dbReference>
<dbReference type="InterPro" id="IPR009006">
    <property type="entry name" value="Ala_racemase/Decarboxylase_C"/>
</dbReference>
<dbReference type="InterPro" id="IPR011079">
    <property type="entry name" value="Ala_racemase_C"/>
</dbReference>
<dbReference type="InterPro" id="IPR001608">
    <property type="entry name" value="Ala_racemase_N"/>
</dbReference>
<dbReference type="InterPro" id="IPR020622">
    <property type="entry name" value="Ala_racemase_pyridoxalP-BS"/>
</dbReference>
<dbReference type="InterPro" id="IPR029066">
    <property type="entry name" value="PLP-binding_barrel"/>
</dbReference>
<dbReference type="NCBIfam" id="TIGR00492">
    <property type="entry name" value="alr"/>
    <property type="match status" value="1"/>
</dbReference>
<dbReference type="PANTHER" id="PTHR30511">
    <property type="entry name" value="ALANINE RACEMASE"/>
    <property type="match status" value="1"/>
</dbReference>
<dbReference type="PANTHER" id="PTHR30511:SF0">
    <property type="entry name" value="ALANINE RACEMASE, CATABOLIC-RELATED"/>
    <property type="match status" value="1"/>
</dbReference>
<dbReference type="Pfam" id="PF00842">
    <property type="entry name" value="Ala_racemase_C"/>
    <property type="match status" value="1"/>
</dbReference>
<dbReference type="Pfam" id="PF01168">
    <property type="entry name" value="Ala_racemase_N"/>
    <property type="match status" value="1"/>
</dbReference>
<dbReference type="PRINTS" id="PR00992">
    <property type="entry name" value="ALARACEMASE"/>
</dbReference>
<dbReference type="SMART" id="SM01005">
    <property type="entry name" value="Ala_racemase_C"/>
    <property type="match status" value="1"/>
</dbReference>
<dbReference type="SUPFAM" id="SSF50621">
    <property type="entry name" value="Alanine racemase C-terminal domain-like"/>
    <property type="match status" value="1"/>
</dbReference>
<dbReference type="SUPFAM" id="SSF51419">
    <property type="entry name" value="PLP-binding barrel"/>
    <property type="match status" value="1"/>
</dbReference>
<dbReference type="PROSITE" id="PS00395">
    <property type="entry name" value="ALANINE_RACEMASE"/>
    <property type="match status" value="1"/>
</dbReference>
<organism>
    <name type="scientific">Streptococcus pyogenes serotype M6 (strain ATCC BAA-946 / MGAS10394)</name>
    <dbReference type="NCBI Taxonomy" id="286636"/>
    <lineage>
        <taxon>Bacteria</taxon>
        <taxon>Bacillati</taxon>
        <taxon>Bacillota</taxon>
        <taxon>Bacilli</taxon>
        <taxon>Lactobacillales</taxon>
        <taxon>Streptococcaceae</taxon>
        <taxon>Streptococcus</taxon>
    </lineage>
</organism>
<sequence>MISSFHRPTVARVNLQAIKENVASVQKHIPLGVKTYAVVKADAYGHGAVQVSKALLPQVDGYCVSNLDEALQLRQAGIDKEILILGVLLPNELKLAITRQVTVTVASLEWLAMAKQEWPDLKGLKVHIKIDSGMGRIGLRSVTEVDNLIAGLKSMGADVEGIFTHFATADEADDTKFNQQLQFFKKLIAGLEDKPRLVHASNSATSIWHSDTIFNAVRLGIVSYGLNPSGSDLSLPFPLQEALSLESSLVHVKMISAGDTVGYGATYTAKKSEYVGTVPIGYADGWTRNMQGFSVLVDGQFCEIIGRVSMDQLTIRLSKAYPLGTKVTLIGSNQQKNISTTDIANYRNTINYEVLCLLSDRIPRIY</sequence>